<comment type="function">
    <text evidence="1">May associate with G-protein coupled receptors and regulate downstream signaling pathways.</text>
</comment>
<comment type="subcellular location">
    <subcellularLocation>
        <location evidence="1">Cell membrane</location>
        <topology evidence="2">Multi-pass membrane protein</topology>
    </subcellularLocation>
</comment>
<comment type="similarity">
    <text evidence="4">Belongs to the LIMR family.</text>
</comment>
<feature type="chain" id="PRO_0000299166" description="G-protein coupled receptor-associated protein LMBRD2">
    <location>
        <begin position="1"/>
        <end position="644"/>
    </location>
</feature>
<feature type="topological domain" description="Extracellular" evidence="2">
    <location>
        <begin position="1"/>
        <end position="4"/>
    </location>
</feature>
<feature type="transmembrane region" description="Helical" evidence="2">
    <location>
        <begin position="5"/>
        <end position="27"/>
    </location>
</feature>
<feature type="topological domain" description="Cytoplasmic" evidence="2">
    <location>
        <begin position="28"/>
        <end position="31"/>
    </location>
</feature>
<feature type="transmembrane region" description="Helical" evidence="2">
    <location>
        <begin position="32"/>
        <end position="52"/>
    </location>
</feature>
<feature type="topological domain" description="Extracellular" evidence="2">
    <location>
        <begin position="53"/>
        <end position="102"/>
    </location>
</feature>
<feature type="transmembrane region" description="Helical" evidence="2">
    <location>
        <begin position="103"/>
        <end position="123"/>
    </location>
</feature>
<feature type="topological domain" description="Cytoplasmic" evidence="2">
    <location>
        <begin position="124"/>
        <end position="145"/>
    </location>
</feature>
<feature type="transmembrane region" description="Helical" evidence="2">
    <location>
        <begin position="146"/>
        <end position="166"/>
    </location>
</feature>
<feature type="topological domain" description="Extracellular" evidence="2">
    <location>
        <begin position="167"/>
        <end position="172"/>
    </location>
</feature>
<feature type="transmembrane region" description="Helical" evidence="2">
    <location>
        <begin position="173"/>
        <end position="193"/>
    </location>
</feature>
<feature type="topological domain" description="Cytoplasmic" evidence="2">
    <location>
        <begin position="194"/>
        <end position="369"/>
    </location>
</feature>
<feature type="transmembrane region" description="Helical" evidence="2">
    <location>
        <begin position="370"/>
        <end position="390"/>
    </location>
</feature>
<feature type="topological domain" description="Extracellular" evidence="2">
    <location>
        <begin position="391"/>
        <end position="412"/>
    </location>
</feature>
<feature type="transmembrane region" description="Helical" evidence="2">
    <location>
        <begin position="413"/>
        <end position="433"/>
    </location>
</feature>
<feature type="topological domain" description="Cytoplasmic" evidence="2">
    <location>
        <begin position="434"/>
        <end position="453"/>
    </location>
</feature>
<feature type="transmembrane region" description="Helical" evidence="2">
    <location>
        <begin position="454"/>
        <end position="474"/>
    </location>
</feature>
<feature type="topological domain" description="Extracellular" evidence="2">
    <location>
        <begin position="475"/>
        <end position="502"/>
    </location>
</feature>
<feature type="transmembrane region" description="Helical" evidence="2">
    <location>
        <begin position="503"/>
        <end position="523"/>
    </location>
</feature>
<feature type="topological domain" description="Cytoplasmic" evidence="2">
    <location>
        <begin position="524"/>
        <end position="644"/>
    </location>
</feature>
<feature type="region of interest" description="Disordered" evidence="3">
    <location>
        <begin position="567"/>
        <end position="644"/>
    </location>
</feature>
<feature type="coiled-coil region" evidence="2">
    <location>
        <begin position="216"/>
        <end position="245"/>
    </location>
</feature>
<feature type="compositionally biased region" description="Basic and acidic residues" evidence="3">
    <location>
        <begin position="567"/>
        <end position="576"/>
    </location>
</feature>
<feature type="compositionally biased region" description="Low complexity" evidence="3">
    <location>
        <begin position="578"/>
        <end position="594"/>
    </location>
</feature>
<feature type="compositionally biased region" description="Polar residues" evidence="3">
    <location>
        <begin position="621"/>
        <end position="644"/>
    </location>
</feature>
<feature type="glycosylation site" description="N-linked (GlcNAc...) asparagine" evidence="2">
    <location>
        <position position="73"/>
    </location>
</feature>
<evidence type="ECO:0000250" key="1">
    <source>
        <dbReference type="UniProtKB" id="Q68DH5"/>
    </source>
</evidence>
<evidence type="ECO:0000255" key="2"/>
<evidence type="ECO:0000256" key="3">
    <source>
        <dbReference type="SAM" id="MobiDB-lite"/>
    </source>
</evidence>
<evidence type="ECO:0000305" key="4"/>
<reference key="1">
    <citation type="journal article" date="2003" name="PLoS Biol.">
        <title>The genome sequence of Caenorhabditis briggsae: a platform for comparative genomics.</title>
        <authorList>
            <person name="Stein L.D."/>
            <person name="Bao Z."/>
            <person name="Blasiar D."/>
            <person name="Blumenthal T."/>
            <person name="Brent M.R."/>
            <person name="Chen N."/>
            <person name="Chinwalla A."/>
            <person name="Clarke L."/>
            <person name="Clee C."/>
            <person name="Coghlan A."/>
            <person name="Coulson A."/>
            <person name="D'Eustachio P."/>
            <person name="Fitch D.H.A."/>
            <person name="Fulton L.A."/>
            <person name="Fulton R.E."/>
            <person name="Griffiths-Jones S."/>
            <person name="Harris T.W."/>
            <person name="Hillier L.W."/>
            <person name="Kamath R."/>
            <person name="Kuwabara P.E."/>
            <person name="Mardis E.R."/>
            <person name="Marra M.A."/>
            <person name="Miner T.L."/>
            <person name="Minx P."/>
            <person name="Mullikin J.C."/>
            <person name="Plumb R.W."/>
            <person name="Rogers J."/>
            <person name="Schein J.E."/>
            <person name="Sohrmann M."/>
            <person name="Spieth J."/>
            <person name="Stajich J.E."/>
            <person name="Wei C."/>
            <person name="Willey D."/>
            <person name="Wilson R.K."/>
            <person name="Durbin R.M."/>
            <person name="Waterston R.H."/>
        </authorList>
    </citation>
    <scope>NUCLEOTIDE SEQUENCE [LARGE SCALE GENOMIC DNA]</scope>
    <source>
        <strain>AF16</strain>
    </source>
</reference>
<organism>
    <name type="scientific">Caenorhabditis briggsae</name>
    <dbReference type="NCBI Taxonomy" id="6238"/>
    <lineage>
        <taxon>Eukaryota</taxon>
        <taxon>Metazoa</taxon>
        <taxon>Ecdysozoa</taxon>
        <taxon>Nematoda</taxon>
        <taxon>Chromadorea</taxon>
        <taxon>Rhabditida</taxon>
        <taxon>Rhabditina</taxon>
        <taxon>Rhabditomorpha</taxon>
        <taxon>Rhabditoidea</taxon>
        <taxon>Rhabditidae</taxon>
        <taxon>Peloderinae</taxon>
        <taxon>Caenorhabditis</taxon>
    </lineage>
</organism>
<sequence>MGTVSLAVQLFIVFLLTSYLLNKYSTIRKQNPIVTISTFIGWYFSLIIVFVLPLDVAITFFHKCENDRQRVLNTTSTPAPIVPECELPGGYVPDDVLFDLWRVVYWSAQILTWLILPLLQSYVTAGNFTIFGKIRAAVINNTVYYAIYSLCFLAILIYAMFKGVSINIENLKVILVSASNTWGLFLLVVLLGHGLVELPRSLWHHGNRHYRLRKTYFDIEKLASEKSEAEENVKEIYKKVRVLFNSMKNDQNGQRRKVRTILSKFSDDVIDQLFPSRQVIDNASMEEIGDYCSEAKLINLHKKTIYAVQTLNNATAQWKVLVDRALFLENLAFSESNGYNLDLARNICVPVGVRRFWYTRLQTPFCRVLGVVTVFMTFFVLFSECTFFVVSYTVSPAAFVTEYASNRFHYKYTQFVAFGIIVYLITCAYFTIFRLQIYKYYHLDPNGHTDENSILFSAILLCRLTPPICLNFLGMIHMDSHVSMAKSFGVETQFTKLMGHLDVIPILAKGINIYLPICIILLCAIHYYRVGAYVLHNIGFDQFVESDEMTNDMINSGRSLVQIERNSIKRSNERNQRNQSWTNTITSNTSTTSNAVNKYKRSRKNEEERPMLEEEEEMEEVSSTTRISLSPTEHPSSSGFFDDM</sequence>
<keyword id="KW-1003">Cell membrane</keyword>
<keyword id="KW-0175">Coiled coil</keyword>
<keyword id="KW-0325">Glycoprotein</keyword>
<keyword id="KW-0472">Membrane</keyword>
<keyword id="KW-1185">Reference proteome</keyword>
<keyword id="KW-0812">Transmembrane</keyword>
<keyword id="KW-1133">Transmembrane helix</keyword>
<gene>
    <name type="ORF">CBG02934</name>
</gene>
<accession>Q61ZW5</accession>
<accession>A8WT65</accession>
<dbReference type="EMBL" id="HE601438">
    <property type="protein sequence ID" value="CAP23676.1"/>
    <property type="molecule type" value="Genomic_DNA"/>
</dbReference>
<dbReference type="RefSeq" id="XP_002631150.1">
    <property type="nucleotide sequence ID" value="XM_002631104.1"/>
</dbReference>
<dbReference type="SMR" id="Q61ZW5"/>
<dbReference type="FunCoup" id="Q61ZW5">
    <property type="interactions" value="2741"/>
</dbReference>
<dbReference type="STRING" id="6238.Q61ZW5"/>
<dbReference type="GeneID" id="8572664"/>
<dbReference type="KEGG" id="cbr:CBG_02934"/>
<dbReference type="CTD" id="8572664"/>
<dbReference type="WormBase" id="CBG02934">
    <property type="protein sequence ID" value="CBP41562"/>
    <property type="gene ID" value="WBGene00025893"/>
</dbReference>
<dbReference type="eggNOG" id="KOG2296">
    <property type="taxonomic scope" value="Eukaryota"/>
</dbReference>
<dbReference type="HOGENOM" id="CLU_018886_0_0_1"/>
<dbReference type="InParanoid" id="Q61ZW5"/>
<dbReference type="OMA" id="QLERICY"/>
<dbReference type="Proteomes" id="UP000008549">
    <property type="component" value="Unassembled WGS sequence"/>
</dbReference>
<dbReference type="GO" id="GO:0016020">
    <property type="term" value="C:membrane"/>
    <property type="evidence" value="ECO:0000318"/>
    <property type="project" value="GO_Central"/>
</dbReference>
<dbReference type="GO" id="GO:0005886">
    <property type="term" value="C:plasma membrane"/>
    <property type="evidence" value="ECO:0007669"/>
    <property type="project" value="UniProtKB-SubCell"/>
</dbReference>
<dbReference type="InterPro" id="IPR051584">
    <property type="entry name" value="GPCR-associated_LMBR1"/>
</dbReference>
<dbReference type="InterPro" id="IPR006876">
    <property type="entry name" value="LMBR1-like_membr_prot"/>
</dbReference>
<dbReference type="PANTHER" id="PTHR21355">
    <property type="entry name" value="G-PROTEIN COUPLED RECEPTOR-ASSOCIATED PROTEIN LMBRD2"/>
    <property type="match status" value="1"/>
</dbReference>
<dbReference type="PANTHER" id="PTHR21355:SF0">
    <property type="entry name" value="G-PROTEIN COUPLED RECEPTOR-ASSOCIATED PROTEIN LMBRD2"/>
    <property type="match status" value="1"/>
</dbReference>
<dbReference type="Pfam" id="PF04791">
    <property type="entry name" value="LMBR1"/>
    <property type="match status" value="1"/>
</dbReference>
<name>LMBD2_CAEBR</name>
<protein>
    <recommendedName>
        <fullName evidence="1">G-protein coupled receptor-associated protein LMBRD2</fullName>
    </recommendedName>
</protein>
<proteinExistence type="inferred from homology"/>